<proteinExistence type="inferred from homology"/>
<gene>
    <name evidence="1" type="primary">fusA</name>
    <name type="ordered locus">Mflv_5076</name>
</gene>
<feature type="chain" id="PRO_0000335848" description="Elongation factor G">
    <location>
        <begin position="1"/>
        <end position="700"/>
    </location>
</feature>
<feature type="domain" description="tr-type G">
    <location>
        <begin position="10"/>
        <end position="286"/>
    </location>
</feature>
<feature type="binding site" evidence="1">
    <location>
        <begin position="19"/>
        <end position="26"/>
    </location>
    <ligand>
        <name>GTP</name>
        <dbReference type="ChEBI" id="CHEBI:37565"/>
    </ligand>
</feature>
<feature type="binding site" evidence="1">
    <location>
        <begin position="83"/>
        <end position="87"/>
    </location>
    <ligand>
        <name>GTP</name>
        <dbReference type="ChEBI" id="CHEBI:37565"/>
    </ligand>
</feature>
<feature type="binding site" evidence="1">
    <location>
        <begin position="137"/>
        <end position="140"/>
    </location>
    <ligand>
        <name>GTP</name>
        <dbReference type="ChEBI" id="CHEBI:37565"/>
    </ligand>
</feature>
<protein>
    <recommendedName>
        <fullName evidence="1">Elongation factor G</fullName>
        <shortName evidence="1">EF-G</shortName>
    </recommendedName>
</protein>
<reference key="1">
    <citation type="submission" date="2007-04" db="EMBL/GenBank/DDBJ databases">
        <title>Complete sequence of chromosome of Mycobacterium gilvum PYR-GCK.</title>
        <authorList>
            <consortium name="US DOE Joint Genome Institute"/>
            <person name="Copeland A."/>
            <person name="Lucas S."/>
            <person name="Lapidus A."/>
            <person name="Barry K."/>
            <person name="Detter J.C."/>
            <person name="Glavina del Rio T."/>
            <person name="Hammon N."/>
            <person name="Israni S."/>
            <person name="Dalin E."/>
            <person name="Tice H."/>
            <person name="Pitluck S."/>
            <person name="Chain P."/>
            <person name="Malfatti S."/>
            <person name="Shin M."/>
            <person name="Vergez L."/>
            <person name="Schmutz J."/>
            <person name="Larimer F."/>
            <person name="Land M."/>
            <person name="Hauser L."/>
            <person name="Kyrpides N."/>
            <person name="Mikhailova N."/>
            <person name="Miller C."/>
            <person name="Richardson P."/>
        </authorList>
    </citation>
    <scope>NUCLEOTIDE SEQUENCE [LARGE SCALE GENOMIC DNA]</scope>
    <source>
        <strain>PYR-GCK</strain>
    </source>
</reference>
<accession>A4T1R3</accession>
<name>EFG_MYCGI</name>
<organism>
    <name type="scientific">Mycolicibacterium gilvum (strain PYR-GCK)</name>
    <name type="common">Mycobacterium gilvum (strain PYR-GCK)</name>
    <dbReference type="NCBI Taxonomy" id="350054"/>
    <lineage>
        <taxon>Bacteria</taxon>
        <taxon>Bacillati</taxon>
        <taxon>Actinomycetota</taxon>
        <taxon>Actinomycetes</taxon>
        <taxon>Mycobacteriales</taxon>
        <taxon>Mycobacteriaceae</taxon>
        <taxon>Mycolicibacterium</taxon>
    </lineage>
</organism>
<comment type="function">
    <text evidence="1">Catalyzes the GTP-dependent ribosomal translocation step during translation elongation. During this step, the ribosome changes from the pre-translocational (PRE) to the post-translocational (POST) state as the newly formed A-site-bound peptidyl-tRNA and P-site-bound deacylated tRNA move to the P and E sites, respectively. Catalyzes the coordinated movement of the two tRNA molecules, the mRNA and conformational changes in the ribosome.</text>
</comment>
<comment type="subcellular location">
    <subcellularLocation>
        <location evidence="1">Cytoplasm</location>
    </subcellularLocation>
</comment>
<comment type="similarity">
    <text evidence="1">Belongs to the TRAFAC class translation factor GTPase superfamily. Classic translation factor GTPase family. EF-G/EF-2 subfamily.</text>
</comment>
<keyword id="KW-0963">Cytoplasm</keyword>
<keyword id="KW-0251">Elongation factor</keyword>
<keyword id="KW-0342">GTP-binding</keyword>
<keyword id="KW-0547">Nucleotide-binding</keyword>
<keyword id="KW-0648">Protein biosynthesis</keyword>
<evidence type="ECO:0000255" key="1">
    <source>
        <dbReference type="HAMAP-Rule" id="MF_00054"/>
    </source>
</evidence>
<dbReference type="EMBL" id="CP000656">
    <property type="protein sequence ID" value="ABP47542.1"/>
    <property type="molecule type" value="Genomic_DNA"/>
</dbReference>
<dbReference type="SMR" id="A4T1R3"/>
<dbReference type="STRING" id="350054.Mflv_5076"/>
<dbReference type="KEGG" id="mgi:Mflv_5076"/>
<dbReference type="eggNOG" id="COG0480">
    <property type="taxonomic scope" value="Bacteria"/>
</dbReference>
<dbReference type="HOGENOM" id="CLU_002794_4_1_11"/>
<dbReference type="OrthoDB" id="9801472at2"/>
<dbReference type="GO" id="GO:0005737">
    <property type="term" value="C:cytoplasm"/>
    <property type="evidence" value="ECO:0007669"/>
    <property type="project" value="UniProtKB-SubCell"/>
</dbReference>
<dbReference type="GO" id="GO:0005525">
    <property type="term" value="F:GTP binding"/>
    <property type="evidence" value="ECO:0007669"/>
    <property type="project" value="UniProtKB-UniRule"/>
</dbReference>
<dbReference type="GO" id="GO:0003924">
    <property type="term" value="F:GTPase activity"/>
    <property type="evidence" value="ECO:0007669"/>
    <property type="project" value="InterPro"/>
</dbReference>
<dbReference type="GO" id="GO:0003746">
    <property type="term" value="F:translation elongation factor activity"/>
    <property type="evidence" value="ECO:0007669"/>
    <property type="project" value="UniProtKB-UniRule"/>
</dbReference>
<dbReference type="GO" id="GO:0032790">
    <property type="term" value="P:ribosome disassembly"/>
    <property type="evidence" value="ECO:0007669"/>
    <property type="project" value="TreeGrafter"/>
</dbReference>
<dbReference type="CDD" id="cd01886">
    <property type="entry name" value="EF-G"/>
    <property type="match status" value="1"/>
</dbReference>
<dbReference type="CDD" id="cd16262">
    <property type="entry name" value="EFG_III"/>
    <property type="match status" value="1"/>
</dbReference>
<dbReference type="CDD" id="cd01434">
    <property type="entry name" value="EFG_mtEFG1_IV"/>
    <property type="match status" value="1"/>
</dbReference>
<dbReference type="CDD" id="cd03713">
    <property type="entry name" value="EFG_mtEFG_C"/>
    <property type="match status" value="1"/>
</dbReference>
<dbReference type="CDD" id="cd04088">
    <property type="entry name" value="EFG_mtEFG_II"/>
    <property type="match status" value="1"/>
</dbReference>
<dbReference type="FunFam" id="2.40.30.10:FF:000006">
    <property type="entry name" value="Elongation factor G"/>
    <property type="match status" value="1"/>
</dbReference>
<dbReference type="FunFam" id="3.30.230.10:FF:000003">
    <property type="entry name" value="Elongation factor G"/>
    <property type="match status" value="1"/>
</dbReference>
<dbReference type="FunFam" id="3.30.70.240:FF:000001">
    <property type="entry name" value="Elongation factor G"/>
    <property type="match status" value="1"/>
</dbReference>
<dbReference type="FunFam" id="3.30.70.870:FF:000001">
    <property type="entry name" value="Elongation factor G"/>
    <property type="match status" value="1"/>
</dbReference>
<dbReference type="FunFam" id="3.40.50.300:FF:000029">
    <property type="entry name" value="Elongation factor G"/>
    <property type="match status" value="1"/>
</dbReference>
<dbReference type="Gene3D" id="3.30.230.10">
    <property type="match status" value="1"/>
</dbReference>
<dbReference type="Gene3D" id="3.30.70.240">
    <property type="match status" value="1"/>
</dbReference>
<dbReference type="Gene3D" id="3.30.70.870">
    <property type="entry name" value="Elongation Factor G (Translational Gtpase), domain 3"/>
    <property type="match status" value="1"/>
</dbReference>
<dbReference type="Gene3D" id="3.40.50.300">
    <property type="entry name" value="P-loop containing nucleotide triphosphate hydrolases"/>
    <property type="match status" value="1"/>
</dbReference>
<dbReference type="Gene3D" id="2.40.30.10">
    <property type="entry name" value="Translation factors"/>
    <property type="match status" value="1"/>
</dbReference>
<dbReference type="HAMAP" id="MF_00054_B">
    <property type="entry name" value="EF_G_EF_2_B"/>
    <property type="match status" value="1"/>
</dbReference>
<dbReference type="InterPro" id="IPR041095">
    <property type="entry name" value="EFG_II"/>
</dbReference>
<dbReference type="InterPro" id="IPR009022">
    <property type="entry name" value="EFG_III"/>
</dbReference>
<dbReference type="InterPro" id="IPR035647">
    <property type="entry name" value="EFG_III/V"/>
</dbReference>
<dbReference type="InterPro" id="IPR047872">
    <property type="entry name" value="EFG_IV"/>
</dbReference>
<dbReference type="InterPro" id="IPR035649">
    <property type="entry name" value="EFG_V"/>
</dbReference>
<dbReference type="InterPro" id="IPR000640">
    <property type="entry name" value="EFG_V-like"/>
</dbReference>
<dbReference type="InterPro" id="IPR004161">
    <property type="entry name" value="EFTu-like_2"/>
</dbReference>
<dbReference type="InterPro" id="IPR031157">
    <property type="entry name" value="G_TR_CS"/>
</dbReference>
<dbReference type="InterPro" id="IPR027417">
    <property type="entry name" value="P-loop_NTPase"/>
</dbReference>
<dbReference type="InterPro" id="IPR020568">
    <property type="entry name" value="Ribosomal_Su5_D2-typ_SF"/>
</dbReference>
<dbReference type="InterPro" id="IPR014721">
    <property type="entry name" value="Ribsml_uS5_D2-typ_fold_subgr"/>
</dbReference>
<dbReference type="InterPro" id="IPR005225">
    <property type="entry name" value="Small_GTP-bd"/>
</dbReference>
<dbReference type="InterPro" id="IPR000795">
    <property type="entry name" value="T_Tr_GTP-bd_dom"/>
</dbReference>
<dbReference type="InterPro" id="IPR009000">
    <property type="entry name" value="Transl_B-barrel_sf"/>
</dbReference>
<dbReference type="InterPro" id="IPR004540">
    <property type="entry name" value="Transl_elong_EFG/EF2"/>
</dbReference>
<dbReference type="InterPro" id="IPR005517">
    <property type="entry name" value="Transl_elong_EFG/EF2_IV"/>
</dbReference>
<dbReference type="NCBIfam" id="TIGR00484">
    <property type="entry name" value="EF-G"/>
    <property type="match status" value="1"/>
</dbReference>
<dbReference type="NCBIfam" id="NF009381">
    <property type="entry name" value="PRK12740.1-5"/>
    <property type="match status" value="1"/>
</dbReference>
<dbReference type="NCBIfam" id="TIGR00231">
    <property type="entry name" value="small_GTP"/>
    <property type="match status" value="1"/>
</dbReference>
<dbReference type="PANTHER" id="PTHR43261:SF1">
    <property type="entry name" value="RIBOSOME-RELEASING FACTOR 2, MITOCHONDRIAL"/>
    <property type="match status" value="1"/>
</dbReference>
<dbReference type="PANTHER" id="PTHR43261">
    <property type="entry name" value="TRANSLATION ELONGATION FACTOR G-RELATED"/>
    <property type="match status" value="1"/>
</dbReference>
<dbReference type="Pfam" id="PF00679">
    <property type="entry name" value="EFG_C"/>
    <property type="match status" value="1"/>
</dbReference>
<dbReference type="Pfam" id="PF14492">
    <property type="entry name" value="EFG_III"/>
    <property type="match status" value="1"/>
</dbReference>
<dbReference type="Pfam" id="PF03764">
    <property type="entry name" value="EFG_IV"/>
    <property type="match status" value="1"/>
</dbReference>
<dbReference type="Pfam" id="PF00009">
    <property type="entry name" value="GTP_EFTU"/>
    <property type="match status" value="1"/>
</dbReference>
<dbReference type="Pfam" id="PF03144">
    <property type="entry name" value="GTP_EFTU_D2"/>
    <property type="match status" value="1"/>
</dbReference>
<dbReference type="PRINTS" id="PR00315">
    <property type="entry name" value="ELONGATNFCT"/>
</dbReference>
<dbReference type="SMART" id="SM00838">
    <property type="entry name" value="EFG_C"/>
    <property type="match status" value="1"/>
</dbReference>
<dbReference type="SMART" id="SM00889">
    <property type="entry name" value="EFG_IV"/>
    <property type="match status" value="1"/>
</dbReference>
<dbReference type="SUPFAM" id="SSF54980">
    <property type="entry name" value="EF-G C-terminal domain-like"/>
    <property type="match status" value="2"/>
</dbReference>
<dbReference type="SUPFAM" id="SSF52540">
    <property type="entry name" value="P-loop containing nucleoside triphosphate hydrolases"/>
    <property type="match status" value="1"/>
</dbReference>
<dbReference type="SUPFAM" id="SSF54211">
    <property type="entry name" value="Ribosomal protein S5 domain 2-like"/>
    <property type="match status" value="1"/>
</dbReference>
<dbReference type="SUPFAM" id="SSF50447">
    <property type="entry name" value="Translation proteins"/>
    <property type="match status" value="1"/>
</dbReference>
<dbReference type="PROSITE" id="PS00301">
    <property type="entry name" value="G_TR_1"/>
    <property type="match status" value="1"/>
</dbReference>
<dbReference type="PROSITE" id="PS51722">
    <property type="entry name" value="G_TR_2"/>
    <property type="match status" value="1"/>
</dbReference>
<sequence length="700" mass="77255">MAQDVLTDLSKVRNIGIMAHIDAGKTTTTERILYYTGVNYKIGETHDGASTTDWMEQEQERGITITSAAVTCFWNQNQINIIDTPGHVDFTVEVERSLRVLDGAVAVFDGKEGVEPQSEQVWRQADKYDVPRICFVNKMDKLGADFYFTVRTIEERLGARPLVIQLPIGAENDFIGIIDLVEMKAKVWRGETALGEKYEVEEIPADLADKAEEYRTKLIEAVAETDEALLEKYFGGEELSIDEIKGAIRKLTVASELYPVLCGSAFKNKGVQPMLDAVIDYLPSPLDVESVTGHVPNKEDEVISRKPSTDEPFSALAFKIAVHPFFGKLTYVRVYSGTVESGSQVINSTKGKKERLGKLFQMHANKENPVERASAGHIYAVIGLKDTTTGDTLCDANQQIVLESMTFPDPVIEVAIEPKTKSDQEKLGTAIQKLAEEDPTFKVHLDQETGQTVIGGMGELHLDILVDRMRREFKVEANVGKPQVAYRETIRRKVEKVEFTHKKQTGGSGQFAKVLIDLEPFSGEDGATYEFENKVTGGRIPREYIPSVDAGAQDAMQYGVLAGYPLVNIKVTLLDGAFHEVDSSEMAFKVAGSQVLKKAAQAAQPVILEPIMAVEVITPEDYMGDVIGDLNSRRGQIQAMEERSGARVVKAQVPLSEMFGYVGDLRSKTQGRANYSMVFDSYAEVPANVSKEIIAKATGQ</sequence>